<sequence>MLLTTTDVLQGREVERYLGIVTAEVVYGTNVLRDFLASLRNIIGGRTRTYEEVLENAQKKVLEELEQRAKRLGANGILGVSIHTNMSATMILVTAAGTAVKLR</sequence>
<accession>Q2JSI0</accession>
<comment type="similarity">
    <text evidence="1">Belongs to the UPF0145 family.</text>
</comment>
<feature type="chain" id="PRO_1000013032" description="UPF0145 protein CYA_2258">
    <location>
        <begin position="1"/>
        <end position="103"/>
    </location>
</feature>
<dbReference type="EMBL" id="CP000239">
    <property type="protein sequence ID" value="ABD00395.1"/>
    <property type="molecule type" value="Genomic_DNA"/>
</dbReference>
<dbReference type="RefSeq" id="WP_011431068.1">
    <property type="nucleotide sequence ID" value="NC_007775.1"/>
</dbReference>
<dbReference type="SMR" id="Q2JSI0"/>
<dbReference type="KEGG" id="cya:CYA_2258"/>
<dbReference type="eggNOG" id="COG0393">
    <property type="taxonomic scope" value="Bacteria"/>
</dbReference>
<dbReference type="HOGENOM" id="CLU_117144_3_2_3"/>
<dbReference type="OrthoDB" id="9796448at2"/>
<dbReference type="Proteomes" id="UP000008818">
    <property type="component" value="Chromosome"/>
</dbReference>
<dbReference type="Gene3D" id="3.30.110.70">
    <property type="entry name" value="Hypothetical protein apc22750. Chain B"/>
    <property type="match status" value="1"/>
</dbReference>
<dbReference type="HAMAP" id="MF_00338">
    <property type="entry name" value="UPF0145"/>
    <property type="match status" value="1"/>
</dbReference>
<dbReference type="InterPro" id="IPR035439">
    <property type="entry name" value="UPF0145_dom_sf"/>
</dbReference>
<dbReference type="InterPro" id="IPR002765">
    <property type="entry name" value="UPF0145_YbjQ-like"/>
</dbReference>
<dbReference type="PANTHER" id="PTHR34068">
    <property type="entry name" value="UPF0145 PROTEIN YBJQ"/>
    <property type="match status" value="1"/>
</dbReference>
<dbReference type="PANTHER" id="PTHR34068:SF1">
    <property type="entry name" value="UPF0145 PROTEIN YBJQ"/>
    <property type="match status" value="1"/>
</dbReference>
<dbReference type="Pfam" id="PF01906">
    <property type="entry name" value="YbjQ_1"/>
    <property type="match status" value="1"/>
</dbReference>
<dbReference type="SUPFAM" id="SSF117782">
    <property type="entry name" value="YbjQ-like"/>
    <property type="match status" value="1"/>
</dbReference>
<name>Y2258_SYNJA</name>
<protein>
    <recommendedName>
        <fullName evidence="1">UPF0145 protein CYA_2258</fullName>
    </recommendedName>
</protein>
<organism>
    <name type="scientific">Synechococcus sp. (strain JA-3-3Ab)</name>
    <name type="common">Cyanobacteria bacterium Yellowstone A-Prime</name>
    <dbReference type="NCBI Taxonomy" id="321327"/>
    <lineage>
        <taxon>Bacteria</taxon>
        <taxon>Bacillati</taxon>
        <taxon>Cyanobacteriota</taxon>
        <taxon>Cyanophyceae</taxon>
        <taxon>Synechococcales</taxon>
        <taxon>Synechococcaceae</taxon>
        <taxon>Synechococcus</taxon>
    </lineage>
</organism>
<proteinExistence type="inferred from homology"/>
<evidence type="ECO:0000255" key="1">
    <source>
        <dbReference type="HAMAP-Rule" id="MF_00338"/>
    </source>
</evidence>
<gene>
    <name type="ordered locus">CYA_2258</name>
</gene>
<reference key="1">
    <citation type="journal article" date="2007" name="ISME J.">
        <title>Population level functional diversity in a microbial community revealed by comparative genomic and metagenomic analyses.</title>
        <authorList>
            <person name="Bhaya D."/>
            <person name="Grossman A.R."/>
            <person name="Steunou A.-S."/>
            <person name="Khuri N."/>
            <person name="Cohan F.M."/>
            <person name="Hamamura N."/>
            <person name="Melendrez M.C."/>
            <person name="Bateson M.M."/>
            <person name="Ward D.M."/>
            <person name="Heidelberg J.F."/>
        </authorList>
    </citation>
    <scope>NUCLEOTIDE SEQUENCE [LARGE SCALE GENOMIC DNA]</scope>
    <source>
        <strain>JA-3-3Ab</strain>
    </source>
</reference>